<organism>
    <name type="scientific">Rattus norvegicus</name>
    <name type="common">Rat</name>
    <dbReference type="NCBI Taxonomy" id="10116"/>
    <lineage>
        <taxon>Eukaryota</taxon>
        <taxon>Metazoa</taxon>
        <taxon>Chordata</taxon>
        <taxon>Craniata</taxon>
        <taxon>Vertebrata</taxon>
        <taxon>Euteleostomi</taxon>
        <taxon>Mammalia</taxon>
        <taxon>Eutheria</taxon>
        <taxon>Euarchontoglires</taxon>
        <taxon>Glires</taxon>
        <taxon>Rodentia</taxon>
        <taxon>Myomorpha</taxon>
        <taxon>Muroidea</taxon>
        <taxon>Muridae</taxon>
        <taxon>Murinae</taxon>
        <taxon>Rattus</taxon>
    </lineage>
</organism>
<gene>
    <name type="primary">Tdp2</name>
    <name type="synonym">Ttrap</name>
</gene>
<reference key="1">
    <citation type="journal article" date="2004" name="Genome Res.">
        <title>The status, quality, and expansion of the NIH full-length cDNA project: the Mammalian Gene Collection (MGC).</title>
        <authorList>
            <consortium name="The MGC Project Team"/>
        </authorList>
    </citation>
    <scope>NUCLEOTIDE SEQUENCE [LARGE SCALE MRNA]</scope>
    <source>
        <tissue>Prostate</tissue>
    </source>
</reference>
<evidence type="ECO:0000250" key="1">
    <source>
        <dbReference type="UniProtKB" id="O95551"/>
    </source>
</evidence>
<evidence type="ECO:0000250" key="2">
    <source>
        <dbReference type="UniProtKB" id="Q9JJX7"/>
    </source>
</evidence>
<evidence type="ECO:0000256" key="3">
    <source>
        <dbReference type="SAM" id="MobiDB-lite"/>
    </source>
</evidence>
<evidence type="ECO:0000305" key="4"/>
<feature type="chain" id="PRO_0000390450" description="Tyrosyl-DNA phosphodiesterase 2">
    <location>
        <begin position="1"/>
        <end position="366"/>
    </location>
</feature>
<feature type="region of interest" description="Disordered" evidence="3">
    <location>
        <begin position="1"/>
        <end position="30"/>
    </location>
</feature>
<feature type="region of interest" description="Interaction with 5' end of substrate DNA" evidence="2">
    <location>
        <begin position="126"/>
        <end position="130"/>
    </location>
</feature>
<feature type="region of interest" description="Interaction with 5' end of substrate DNA" evidence="2">
    <location>
        <begin position="232"/>
        <end position="237"/>
    </location>
</feature>
<feature type="region of interest" description="Interaction with 5' end of substrate DNA" evidence="2">
    <location>
        <begin position="270"/>
        <end position="272"/>
    </location>
</feature>
<feature type="compositionally biased region" description="Low complexity" evidence="3">
    <location>
        <begin position="1"/>
        <end position="22"/>
    </location>
</feature>
<feature type="active site" description="Proton donor/acceptor" evidence="1">
    <location>
        <position position="268"/>
    </location>
</feature>
<feature type="binding site" evidence="2">
    <location>
        <position position="128"/>
    </location>
    <ligand>
        <name>Mg(2+)</name>
        <dbReference type="ChEBI" id="CHEBI:18420"/>
    </ligand>
</feature>
<feature type="binding site" evidence="2">
    <location>
        <position position="158"/>
    </location>
    <ligand>
        <name>Mg(2+)</name>
        <dbReference type="ChEBI" id="CHEBI:18420"/>
    </ligand>
</feature>
<feature type="site" description="Interaction with 5' end of substrate DNA" evidence="2">
    <location>
        <position position="184"/>
    </location>
</feature>
<feature type="site" description="Interaction with 5' end of substrate DNA" evidence="2">
    <location>
        <position position="303"/>
    </location>
</feature>
<feature type="site" description="Interaction with 5' end of substrate DNA" evidence="2">
    <location>
        <position position="321"/>
    </location>
</feature>
<feature type="site" description="Interaction with 5' end of substrate DNA" evidence="2">
    <location>
        <position position="355"/>
    </location>
</feature>
<feature type="modified residue" description="N-acetylmethionine" evidence="1">
    <location>
        <position position="1"/>
    </location>
</feature>
<feature type="modified residue" description="Phosphothreonine; by ACVR1B" evidence="1">
    <location>
        <position position="95"/>
    </location>
</feature>
<feature type="cross-link" description="Glycyl lysine isopeptide (Lys-Gly) (interchain with G-Cter in SUMO2)" evidence="1">
    <location>
        <position position="30"/>
    </location>
</feature>
<proteinExistence type="evidence at transcript level"/>
<protein>
    <recommendedName>
        <fullName>Tyrosyl-DNA phosphodiesterase 2</fullName>
        <shortName>Tyr-DNA phosphodiesterase 2</shortName>
        <ecNumber evidence="2">3.1.4.-</ecNumber>
    </recommendedName>
    <alternativeName>
        <fullName>5'-tyrosyl-DNA phosphodiesterase</fullName>
        <shortName>5'-Tyr-DNA phosphodiesterase</shortName>
    </alternativeName>
    <alternativeName>
        <fullName>TRAF and TNF receptor-associated protein</fullName>
    </alternativeName>
</protein>
<name>TYDP2_RAT</name>
<accession>Q3T1H5</accession>
<comment type="function">
    <text evidence="1">DNA repair enzyme that can remove a variety of covalent adducts from DNA through hydrolysis of a 5'-phosphodiester bond, giving rise to DNA with a free 5' phosphate. Catalyzes the hydrolysis of dead-end complexes between DNA and the topoisomerase 2 (TOP2) active site tyrosine residue. The 5'-tyrosyl DNA phosphodiesterase activity can enable the repair of TOP2-induced DNA double-strand breaks/DSBs without the need for nuclease activity, creating a 'clean' DSB with 5'-phosphate termini that are ready for ligation. Thereby, protects the transcription of many genes involved in neurological development and maintenance from the abortive activity of TOP2. Hydrolyzes 5'-phosphoglycolates on protruding 5' ends on DSBs due to DNA damage by radiation and free radicals. Has preference for single-stranded DNA or duplex DNA with a 4 base pair overhang as substrate. Also has 3'-tyrosyl DNA phosphodiesterase activity, but less efficiently and much slower than TDP1. Constitutes the major if not only 5'-tyrosyl-DNA phosphodiesterase in cells. Also acts as an adapter by participating in the specific activation of MAP3K7/TAK1 in response to TGF-beta: associates with components of the TGF-beta receptor-TRAF6-TAK1 signaling module and promotes their ubiquitination dependent complex formation. Involved in non-canonical TGF-beta induced signaling routes. May also act as a negative regulator of ETS1 and may inhibit NF-kappa-B activation. Acts as a regulator of ribosome biogenesis following stress.</text>
</comment>
<comment type="cofactor">
    <cofactor evidence="2">
        <name>Mg(2+)</name>
        <dbReference type="ChEBI" id="CHEBI:18420"/>
    </cofactor>
    <cofactor evidence="2">
        <name>Mn(2+)</name>
        <dbReference type="ChEBI" id="CHEBI:29035"/>
    </cofactor>
    <text evidence="2">Binds 1 magnesium or manganese ion per subunit.</text>
</comment>
<comment type="subunit">
    <text evidence="1">Interacts with TRAF2, TRAF3, TRAF5, TRAF6, TNFRSF8/CD30, TNFRSF5/CD40, TNFRSF1B/TNF-R75, ETS1, ETS2, FLI1, SMAD3 and ACVR1B/ALK4.</text>
</comment>
<comment type="subcellular location">
    <subcellularLocation>
        <location evidence="1">Nucleus</location>
    </subcellularLocation>
    <subcellularLocation>
        <location evidence="1">Nucleus</location>
        <location evidence="1">PML body</location>
    </subcellularLocation>
    <subcellularLocation>
        <location evidence="1">Nucleus</location>
        <location evidence="1">Nucleolus</location>
    </subcellularLocation>
    <subcellularLocation>
        <location evidence="1">Cytoplasm</location>
    </subcellularLocation>
    <text evidence="1">Localizes to nucleolar cavities following stress; localization to nucleolus is dependent on PML protein.</text>
</comment>
<comment type="PTM">
    <text evidence="1">Ubiquitinated by TRAF6.</text>
</comment>
<comment type="similarity">
    <text evidence="4">Belongs to the CCR4/nocturin family.</text>
</comment>
<dbReference type="EC" id="3.1.4.-" evidence="2"/>
<dbReference type="EMBL" id="BC101920">
    <property type="protein sequence ID" value="AAI01921.1"/>
    <property type="molecule type" value="mRNA"/>
</dbReference>
<dbReference type="RefSeq" id="NP_001030119.1">
    <property type="nucleotide sequence ID" value="NM_001034947.1"/>
</dbReference>
<dbReference type="SMR" id="Q3T1H5"/>
<dbReference type="FunCoup" id="Q3T1H5">
    <property type="interactions" value="1383"/>
</dbReference>
<dbReference type="STRING" id="10116.ENSRNOP00000056326"/>
<dbReference type="PhosphoSitePlus" id="Q3T1H5"/>
<dbReference type="PaxDb" id="10116-ENSRNOP00000056326"/>
<dbReference type="GeneID" id="498749"/>
<dbReference type="KEGG" id="rno:498749"/>
<dbReference type="UCSC" id="RGD:1560342">
    <property type="organism name" value="rat"/>
</dbReference>
<dbReference type="AGR" id="RGD:1560342"/>
<dbReference type="CTD" id="51567"/>
<dbReference type="RGD" id="1560342">
    <property type="gene designation" value="Tdp2"/>
</dbReference>
<dbReference type="eggNOG" id="KOG2756">
    <property type="taxonomic scope" value="Eukaryota"/>
</dbReference>
<dbReference type="InParanoid" id="Q3T1H5"/>
<dbReference type="OrthoDB" id="36654at9989"/>
<dbReference type="PhylomeDB" id="Q3T1H5"/>
<dbReference type="Reactome" id="R-RNO-5693571">
    <property type="pathway name" value="Nonhomologous End-Joining (NHEJ)"/>
</dbReference>
<dbReference type="PRO" id="PR:Q3T1H5"/>
<dbReference type="Proteomes" id="UP000002494">
    <property type="component" value="Unplaced"/>
</dbReference>
<dbReference type="GO" id="GO:0005737">
    <property type="term" value="C:cytoplasm"/>
    <property type="evidence" value="ECO:0000266"/>
    <property type="project" value="RGD"/>
</dbReference>
<dbReference type="GO" id="GO:0005730">
    <property type="term" value="C:nucleolus"/>
    <property type="evidence" value="ECO:0007669"/>
    <property type="project" value="UniProtKB-SubCell"/>
</dbReference>
<dbReference type="GO" id="GO:0005634">
    <property type="term" value="C:nucleus"/>
    <property type="evidence" value="ECO:0000266"/>
    <property type="project" value="RGD"/>
</dbReference>
<dbReference type="GO" id="GO:0016605">
    <property type="term" value="C:PML body"/>
    <property type="evidence" value="ECO:0000250"/>
    <property type="project" value="UniProtKB"/>
</dbReference>
<dbReference type="GO" id="GO:0070260">
    <property type="term" value="F:5'-tyrosyl-DNA phosphodiesterase activity"/>
    <property type="evidence" value="ECO:0000250"/>
    <property type="project" value="UniProtKB"/>
</dbReference>
<dbReference type="GO" id="GO:0000287">
    <property type="term" value="F:magnesium ion binding"/>
    <property type="evidence" value="ECO:0000250"/>
    <property type="project" value="UniProtKB"/>
</dbReference>
<dbReference type="GO" id="GO:0030145">
    <property type="term" value="F:manganese ion binding"/>
    <property type="evidence" value="ECO:0000250"/>
    <property type="project" value="UniProtKB"/>
</dbReference>
<dbReference type="GO" id="GO:0004518">
    <property type="term" value="F:nuclease activity"/>
    <property type="evidence" value="ECO:0007669"/>
    <property type="project" value="UniProtKB-KW"/>
</dbReference>
<dbReference type="GO" id="GO:0003697">
    <property type="term" value="F:single-stranded DNA binding"/>
    <property type="evidence" value="ECO:0000250"/>
    <property type="project" value="UniProtKB"/>
</dbReference>
<dbReference type="GO" id="GO:0036317">
    <property type="term" value="F:tyrosyl-RNA phosphodiesterase activity"/>
    <property type="evidence" value="ECO:0000266"/>
    <property type="project" value="RGD"/>
</dbReference>
<dbReference type="GO" id="GO:0006302">
    <property type="term" value="P:double-strand break repair"/>
    <property type="evidence" value="ECO:0000250"/>
    <property type="project" value="UniProtKB"/>
</dbReference>
<dbReference type="GO" id="GO:0048666">
    <property type="term" value="P:neuron development"/>
    <property type="evidence" value="ECO:0000250"/>
    <property type="project" value="UniProtKB"/>
</dbReference>
<dbReference type="CDD" id="cd09080">
    <property type="entry name" value="TDP2"/>
    <property type="match status" value="1"/>
</dbReference>
<dbReference type="FunFam" id="3.60.10.10:FF:000024">
    <property type="entry name" value="Tyrosyl-DNA phosphodiesterase 2"/>
    <property type="match status" value="1"/>
</dbReference>
<dbReference type="Gene3D" id="1.10.8.10">
    <property type="entry name" value="DNA helicase RuvA subunit, C-terminal domain"/>
    <property type="match status" value="1"/>
</dbReference>
<dbReference type="Gene3D" id="3.60.10.10">
    <property type="entry name" value="Endonuclease/exonuclease/phosphatase"/>
    <property type="match status" value="1"/>
</dbReference>
<dbReference type="InterPro" id="IPR036691">
    <property type="entry name" value="Endo/exonu/phosph_ase_sf"/>
</dbReference>
<dbReference type="InterPro" id="IPR005135">
    <property type="entry name" value="Endo/exonuclease/phosphatase"/>
</dbReference>
<dbReference type="InterPro" id="IPR051547">
    <property type="entry name" value="TDP2-like"/>
</dbReference>
<dbReference type="PANTHER" id="PTHR15822">
    <property type="entry name" value="TRAF AND TNF RECEPTOR-ASSOCIATED PROTEIN"/>
    <property type="match status" value="1"/>
</dbReference>
<dbReference type="PANTHER" id="PTHR15822:SF4">
    <property type="entry name" value="TYROSYL-DNA PHOSPHODIESTERASE 2"/>
    <property type="match status" value="1"/>
</dbReference>
<dbReference type="Pfam" id="PF03372">
    <property type="entry name" value="Exo_endo_phos"/>
    <property type="match status" value="1"/>
</dbReference>
<dbReference type="Pfam" id="PF14555">
    <property type="entry name" value="UBA_4"/>
    <property type="match status" value="1"/>
</dbReference>
<dbReference type="SUPFAM" id="SSF56219">
    <property type="entry name" value="DNase I-like"/>
    <property type="match status" value="1"/>
</dbReference>
<keyword id="KW-0007">Acetylation</keyword>
<keyword id="KW-0963">Cytoplasm</keyword>
<keyword id="KW-0227">DNA damage</keyword>
<keyword id="KW-0234">DNA repair</keyword>
<keyword id="KW-0378">Hydrolase</keyword>
<keyword id="KW-1017">Isopeptide bond</keyword>
<keyword id="KW-0460">Magnesium</keyword>
<keyword id="KW-0479">Metal-binding</keyword>
<keyword id="KW-0540">Nuclease</keyword>
<keyword id="KW-0539">Nucleus</keyword>
<keyword id="KW-0597">Phosphoprotein</keyword>
<keyword id="KW-1185">Reference proteome</keyword>
<keyword id="KW-0832">Ubl conjugation</keyword>
<sequence length="366" mass="40793">MASGSSSDAAESAEPAAAPAAAETEEDQVKRRRLQSLGFALVTSCDTTVASTFLSENNWQTKKALSAFFEQPENDLARPHQPPTSSKSEDYVDLTNEDANDTTILETSPSGTPLEDSSTISFITWNIDGLDGCNLPERARGVCSCLALYSPDVVFLQEVIPSYCAYLRKRARTYNIITGNEEGYFTAILLKKGRVKFKGQEIIPFPNTKMMRNLLCVNVSLGGNEFCLMTSHLESTRKHSAERINQLKTVFQKMQEATDSTTVIFAGDTNLRDQEVIKCGGLPDNVFDAWEFLGKPKHCRYTWDTKANDNLRIPAACKHRFDRIFFRAEEGHLIPQSLDLIGLERLDCGRFPSDHWGLLCTLNVVL</sequence>